<comment type="function">
    <text evidence="1 5">Involved in membrane organization. Involved in a novel pathway of export of proteins that lack a cleavable signal sequence. Non-classical export pathway also functions as an alternative clearance/detoxification pathway to eliminate damaged material, when the basic repair pathway is not sufficient (By similarity). Regulates actin organization and subsequent morphogenesis and pathogenesis.</text>
</comment>
<comment type="subcellular location">
    <subcellularLocation>
        <location evidence="4">Cell membrane</location>
        <topology evidence="2">Multi-pass membrane protein</topology>
    </subcellularLocation>
    <text evidence="1">Accumulates in membrane domains at eisosomes.</text>
</comment>
<comment type="disruption phenotype">
    <text evidence="5">Leads to decreased virulence and forms abnormal hyphae in mice. Shows defects in forming hyphae and invading low concentrations of agar but can invade well in higher agar concentrations.</text>
</comment>
<comment type="similarity">
    <text evidence="7">Belongs to the NCE102 family.</text>
</comment>
<evidence type="ECO:0000250" key="1">
    <source>
        <dbReference type="UniProtKB" id="Q12207"/>
    </source>
</evidence>
<evidence type="ECO:0000255" key="2"/>
<evidence type="ECO:0000255" key="3">
    <source>
        <dbReference type="PROSITE-ProRule" id="PRU00581"/>
    </source>
</evidence>
<evidence type="ECO:0000269" key="4">
    <source>
    </source>
</evidence>
<evidence type="ECO:0000269" key="5">
    <source>
    </source>
</evidence>
<evidence type="ECO:0000303" key="6">
    <source>
    </source>
</evidence>
<evidence type="ECO:0000305" key="7"/>
<name>NCE2_CANAL</name>
<gene>
    <name evidence="6" type="primary">NCE102</name>
    <name type="ordered locus">CAALFM_C304910CA</name>
    <name type="ORF">CaO19.13381</name>
    <name type="ORF">CaO19.5960</name>
</gene>
<protein>
    <recommendedName>
        <fullName evidence="7">Non-classical export protein 102</fullName>
    </recommendedName>
</protein>
<dbReference type="EMBL" id="CP017625">
    <property type="protein sequence ID" value="AOW28507.1"/>
    <property type="molecule type" value="Genomic_DNA"/>
</dbReference>
<dbReference type="RefSeq" id="XP_723171.1">
    <property type="nucleotide sequence ID" value="XM_718078.1"/>
</dbReference>
<dbReference type="SMR" id="Q5ANE3"/>
<dbReference type="FunCoup" id="Q5ANE3">
    <property type="interactions" value="107"/>
</dbReference>
<dbReference type="STRING" id="237561.Q5ANE3"/>
<dbReference type="EnsemblFungi" id="C3_04910C_A-T">
    <property type="protein sequence ID" value="C3_04910C_A-T-p1"/>
    <property type="gene ID" value="C3_04910C_A"/>
</dbReference>
<dbReference type="GeneID" id="3635267"/>
<dbReference type="KEGG" id="cal:CAALFM_C304910CA"/>
<dbReference type="CGD" id="CAL0000190917">
    <property type="gene designation" value="NCE102"/>
</dbReference>
<dbReference type="VEuPathDB" id="FungiDB:C3_04910C_A"/>
<dbReference type="eggNOG" id="ENOG502RZW2">
    <property type="taxonomic scope" value="Eukaryota"/>
</dbReference>
<dbReference type="HOGENOM" id="CLU_098356_1_0_1"/>
<dbReference type="InParanoid" id="Q5ANE3"/>
<dbReference type="OMA" id="AFMWFLW"/>
<dbReference type="OrthoDB" id="5423111at2759"/>
<dbReference type="PHI-base" id="PHI:4003"/>
<dbReference type="PRO" id="PR:Q5ANE3"/>
<dbReference type="Proteomes" id="UP000000559">
    <property type="component" value="Chromosome 3"/>
</dbReference>
<dbReference type="GO" id="GO:0032126">
    <property type="term" value="C:eisosome"/>
    <property type="evidence" value="ECO:0000314"/>
    <property type="project" value="CGD"/>
</dbReference>
<dbReference type="GO" id="GO:1903561">
    <property type="term" value="C:extracellular vesicle"/>
    <property type="evidence" value="ECO:0000314"/>
    <property type="project" value="CGD"/>
</dbReference>
<dbReference type="GO" id="GO:0005886">
    <property type="term" value="C:plasma membrane"/>
    <property type="evidence" value="ECO:0000314"/>
    <property type="project" value="CGD"/>
</dbReference>
<dbReference type="GO" id="GO:0030036">
    <property type="term" value="P:actin cytoskeleton organization"/>
    <property type="evidence" value="ECO:0000315"/>
    <property type="project" value="CGD"/>
</dbReference>
<dbReference type="GO" id="GO:0007015">
    <property type="term" value="P:actin filament organization"/>
    <property type="evidence" value="ECO:0000315"/>
    <property type="project" value="CACAO"/>
</dbReference>
<dbReference type="GO" id="GO:0070941">
    <property type="term" value="P:eisosome assembly"/>
    <property type="evidence" value="ECO:0000318"/>
    <property type="project" value="GO_Central"/>
</dbReference>
<dbReference type="GO" id="GO:0090154">
    <property type="term" value="P:positive regulation of sphingolipid biosynthetic process"/>
    <property type="evidence" value="ECO:0000315"/>
    <property type="project" value="CGD"/>
</dbReference>
<dbReference type="GO" id="GO:0072659">
    <property type="term" value="P:protein localization to plasma membrane"/>
    <property type="evidence" value="ECO:0000318"/>
    <property type="project" value="GO_Central"/>
</dbReference>
<dbReference type="GO" id="GO:0015031">
    <property type="term" value="P:protein transport"/>
    <property type="evidence" value="ECO:0007669"/>
    <property type="project" value="UniProtKB-KW"/>
</dbReference>
<dbReference type="InterPro" id="IPR008253">
    <property type="entry name" value="Marvel"/>
</dbReference>
<dbReference type="InterPro" id="IPR052649">
    <property type="entry name" value="NCE102-like"/>
</dbReference>
<dbReference type="PANTHER" id="PTHR28165">
    <property type="entry name" value="NON-CLASSICAL EXPORT PROTEIN 2-RELATED"/>
    <property type="match status" value="1"/>
</dbReference>
<dbReference type="PANTHER" id="PTHR28165:SF1">
    <property type="entry name" value="NON-CLASSICAL EXPORT PROTEIN 2-RELATED"/>
    <property type="match status" value="1"/>
</dbReference>
<dbReference type="Pfam" id="PF01284">
    <property type="entry name" value="MARVEL"/>
    <property type="match status" value="1"/>
</dbReference>
<dbReference type="PROSITE" id="PS51225">
    <property type="entry name" value="MARVEL"/>
    <property type="match status" value="1"/>
</dbReference>
<keyword id="KW-1003">Cell membrane</keyword>
<keyword id="KW-0472">Membrane</keyword>
<keyword id="KW-0653">Protein transport</keyword>
<keyword id="KW-1185">Reference proteome</keyword>
<keyword id="KW-0812">Transmembrane</keyword>
<keyword id="KW-1133">Transmembrane helix</keyword>
<keyword id="KW-0813">Transport</keyword>
<keyword id="KW-0843">Virulence</keyword>
<proteinExistence type="evidence at protein level"/>
<feature type="chain" id="PRO_0000431765" description="Non-classical export protein 102">
    <location>
        <begin position="1"/>
        <end position="170"/>
    </location>
</feature>
<feature type="topological domain" description="Cytoplasmic" evidence="7">
    <location>
        <begin position="1"/>
        <end position="11"/>
    </location>
</feature>
<feature type="transmembrane region" description="Helical; Name=1" evidence="2">
    <location>
        <begin position="12"/>
        <end position="32"/>
    </location>
</feature>
<feature type="topological domain" description="Extracellular" evidence="7">
    <location>
        <begin position="33"/>
        <end position="38"/>
    </location>
</feature>
<feature type="transmembrane region" description="Helical; Name=2" evidence="2">
    <location>
        <begin position="39"/>
        <end position="61"/>
    </location>
</feature>
<feature type="topological domain" description="Cytoplasmic" evidence="7">
    <location>
        <begin position="62"/>
        <end position="76"/>
    </location>
</feature>
<feature type="transmembrane region" description="Helical; Name=3" evidence="2">
    <location>
        <begin position="77"/>
        <end position="97"/>
    </location>
</feature>
<feature type="topological domain" description="Extracellular" evidence="7">
    <location>
        <begin position="98"/>
        <end position="125"/>
    </location>
</feature>
<feature type="transmembrane region" description="Helical; Name=4" evidence="2">
    <location>
        <begin position="126"/>
        <end position="146"/>
    </location>
</feature>
<feature type="topological domain" description="Cytoplasmic" evidence="7">
    <location>
        <begin position="147"/>
        <end position="170"/>
    </location>
</feature>
<feature type="domain" description="MARVEL" evidence="3">
    <location>
        <begin position="6"/>
        <end position="141"/>
    </location>
</feature>
<reference key="1">
    <citation type="journal article" date="2004" name="Proc. Natl. Acad. Sci. U.S.A.">
        <title>The diploid genome sequence of Candida albicans.</title>
        <authorList>
            <person name="Jones T."/>
            <person name="Federspiel N.A."/>
            <person name="Chibana H."/>
            <person name="Dungan J."/>
            <person name="Kalman S."/>
            <person name="Magee B.B."/>
            <person name="Newport G."/>
            <person name="Thorstenson Y.R."/>
            <person name="Agabian N."/>
            <person name="Magee P.T."/>
            <person name="Davis R.W."/>
            <person name="Scherer S."/>
        </authorList>
    </citation>
    <scope>NUCLEOTIDE SEQUENCE [LARGE SCALE GENOMIC DNA]</scope>
    <source>
        <strain>SC5314 / ATCC MYA-2876</strain>
    </source>
</reference>
<reference key="2">
    <citation type="journal article" date="2007" name="Genome Biol.">
        <title>Assembly of the Candida albicans genome into sixteen supercontigs aligned on the eight chromosomes.</title>
        <authorList>
            <person name="van het Hoog M."/>
            <person name="Rast T.J."/>
            <person name="Martchenko M."/>
            <person name="Grindle S."/>
            <person name="Dignard D."/>
            <person name="Hogues H."/>
            <person name="Cuomo C."/>
            <person name="Berriman M."/>
            <person name="Scherer S."/>
            <person name="Magee B.B."/>
            <person name="Whiteway M."/>
            <person name="Chibana H."/>
            <person name="Nantel A."/>
            <person name="Magee P.T."/>
        </authorList>
    </citation>
    <scope>GENOME REANNOTATION</scope>
    <source>
        <strain>SC5314 / ATCC MYA-2876</strain>
    </source>
</reference>
<reference key="3">
    <citation type="journal article" date="2013" name="Genome Biol.">
        <title>Assembly of a phased diploid Candida albicans genome facilitates allele-specific measurements and provides a simple model for repeat and indel structure.</title>
        <authorList>
            <person name="Muzzey D."/>
            <person name="Schwartz K."/>
            <person name="Weissman J.S."/>
            <person name="Sherlock G."/>
        </authorList>
    </citation>
    <scope>NUCLEOTIDE SEQUENCE [LARGE SCALE GENOMIC DNA]</scope>
    <scope>GENOME REANNOTATION</scope>
    <source>
        <strain>SC5314 / ATCC MYA-2876</strain>
    </source>
</reference>
<reference key="4">
    <citation type="journal article" date="2009" name="Proteomics">
        <title>Analysis of Candida albicans plasma membrane proteome.</title>
        <authorList>
            <person name="Cabezon V."/>
            <person name="Llama-Palacios A."/>
            <person name="Nombela C."/>
            <person name="Monteoliva L."/>
            <person name="Gil C."/>
        </authorList>
    </citation>
    <scope>IDENTIFICATION BY MASS SPECTROMETRY</scope>
    <scope>SUBCELLULAR LOCATION</scope>
</reference>
<reference key="5">
    <citation type="journal article" date="2013" name="MBio">
        <title>The MARVEL domain protein Nce102 regulates actin organization and invasive growth of Candida albicans.</title>
        <authorList>
            <person name="Douglas L.M."/>
            <person name="Wang H.X."/>
            <person name="Konopka J.B."/>
        </authorList>
    </citation>
    <scope>DISRUPTION PHENOTYPE</scope>
    <scope>FUNCTION</scope>
</reference>
<sequence length="170" mass="18123">MLAIGDVILRAFNFVFLVIALGLTGSLAATTITQHNPQINFAVFAAAFGLLTSSFYGVFAYFVAAFAWPVILFVFDFLNFVFTFAAATAIAAGIRAHSCSNQDYLDDNNIAQGSSGRCRKAQASTAFLYFSTFIFIASAIFSAISLSKGGLFGHSSRPAPRTGVPTMSQV</sequence>
<organism>
    <name type="scientific">Candida albicans (strain SC5314 / ATCC MYA-2876)</name>
    <name type="common">Yeast</name>
    <dbReference type="NCBI Taxonomy" id="237561"/>
    <lineage>
        <taxon>Eukaryota</taxon>
        <taxon>Fungi</taxon>
        <taxon>Dikarya</taxon>
        <taxon>Ascomycota</taxon>
        <taxon>Saccharomycotina</taxon>
        <taxon>Pichiomycetes</taxon>
        <taxon>Debaryomycetaceae</taxon>
        <taxon>Candida/Lodderomyces clade</taxon>
        <taxon>Candida</taxon>
    </lineage>
</organism>
<accession>Q5ANE3</accession>
<accession>A0A1D8PK31</accession>